<protein>
    <recommendedName>
        <fullName evidence="1">Phospho-N-acetylmuramoyl-pentapeptide-transferase</fullName>
        <ecNumber evidence="1">2.7.8.13</ecNumber>
    </recommendedName>
    <alternativeName>
        <fullName evidence="1">UDP-MurNAc-pentapeptide phosphotransferase</fullName>
    </alternativeName>
</protein>
<reference key="1">
    <citation type="journal article" date="2011" name="BMC Genomics">
        <title>Complete genome sequence of the filamentous anoxygenic phototrophic bacterium Chloroflexus aurantiacus.</title>
        <authorList>
            <person name="Tang K.H."/>
            <person name="Barry K."/>
            <person name="Chertkov O."/>
            <person name="Dalin E."/>
            <person name="Han C.S."/>
            <person name="Hauser L.J."/>
            <person name="Honchak B.M."/>
            <person name="Karbach L.E."/>
            <person name="Land M.L."/>
            <person name="Lapidus A."/>
            <person name="Larimer F.W."/>
            <person name="Mikhailova N."/>
            <person name="Pitluck S."/>
            <person name="Pierson B.K."/>
            <person name="Blankenship R.E."/>
        </authorList>
    </citation>
    <scope>NUCLEOTIDE SEQUENCE [LARGE SCALE GENOMIC DNA]</scope>
    <source>
        <strain>ATCC 29366 / DSM 635 / J-10-fl</strain>
    </source>
</reference>
<name>MRAY_CHLAA</name>
<proteinExistence type="inferred from homology"/>
<feature type="chain" id="PRO_0000332528" description="Phospho-N-acetylmuramoyl-pentapeptide-transferase">
    <location>
        <begin position="1"/>
        <end position="367"/>
    </location>
</feature>
<feature type="transmembrane region" description="Helical" evidence="1">
    <location>
        <begin position="16"/>
        <end position="36"/>
    </location>
</feature>
<feature type="transmembrane region" description="Helical" evidence="1">
    <location>
        <begin position="62"/>
        <end position="82"/>
    </location>
</feature>
<feature type="transmembrane region" description="Helical" evidence="1">
    <location>
        <begin position="87"/>
        <end position="107"/>
    </location>
</feature>
<feature type="transmembrane region" description="Helical" evidence="1">
    <location>
        <begin position="125"/>
        <end position="145"/>
    </location>
</feature>
<feature type="transmembrane region" description="Helical" evidence="1">
    <location>
        <begin position="158"/>
        <end position="178"/>
    </location>
</feature>
<feature type="transmembrane region" description="Helical" evidence="1">
    <location>
        <begin position="190"/>
        <end position="210"/>
    </location>
</feature>
<feature type="transmembrane region" description="Helical" evidence="1">
    <location>
        <begin position="214"/>
        <end position="234"/>
    </location>
</feature>
<feature type="transmembrane region" description="Helical" evidence="1">
    <location>
        <begin position="240"/>
        <end position="260"/>
    </location>
</feature>
<feature type="transmembrane region" description="Helical" evidence="1">
    <location>
        <begin position="264"/>
        <end position="284"/>
    </location>
</feature>
<feature type="transmembrane region" description="Helical" evidence="1">
    <location>
        <begin position="326"/>
        <end position="346"/>
    </location>
</feature>
<evidence type="ECO:0000255" key="1">
    <source>
        <dbReference type="HAMAP-Rule" id="MF_00038"/>
    </source>
</evidence>
<keyword id="KW-0131">Cell cycle</keyword>
<keyword id="KW-0132">Cell division</keyword>
<keyword id="KW-1003">Cell membrane</keyword>
<keyword id="KW-0133">Cell shape</keyword>
<keyword id="KW-0961">Cell wall biogenesis/degradation</keyword>
<keyword id="KW-0460">Magnesium</keyword>
<keyword id="KW-0472">Membrane</keyword>
<keyword id="KW-0479">Metal-binding</keyword>
<keyword id="KW-0573">Peptidoglycan synthesis</keyword>
<keyword id="KW-1185">Reference proteome</keyword>
<keyword id="KW-0808">Transferase</keyword>
<keyword id="KW-0812">Transmembrane</keyword>
<keyword id="KW-1133">Transmembrane helix</keyword>
<sequence>MSVLRAVLVQDMARALLLAAAAFVLTLIIGGWWVRFARRHKLGKRIRPDGPQSHLVKVGTPTMGGIMIVSTVLILTILFNLVDRWSMLLPLGVMVSFAVLGAIDDWLSLTGSRSKTHGFTVRFKFWIMMAVAFVASLALYLPQPYGLEHEGLVQIPFVGEVNIGLWFIPIAVLIIVFISNAVNITDGLDSLAGWNLTLAFGAYGVITFLAEPRLTNLMAFCFTVVGACAAFLWYNAYPAQVFMGDLGALALGATLAVVALQSQQWLLLPVIGIVFVVEALSTMIQTGYFKWTKWRYGEGRRIFKMAPLHHHFELLGWSQPQVTQRFVLIGTVAAMVGISLALIFGPPATGLQVDQPGIIVIEGDGSR</sequence>
<accession>A9WG76</accession>
<comment type="function">
    <text evidence="1">Catalyzes the initial step of the lipid cycle reactions in the biosynthesis of the cell wall peptidoglycan: transfers peptidoglycan precursor phospho-MurNAc-pentapeptide from UDP-MurNAc-pentapeptide onto the lipid carrier undecaprenyl phosphate, yielding undecaprenyl-pyrophosphoryl-MurNAc-pentapeptide, known as lipid I.</text>
</comment>
<comment type="catalytic activity">
    <reaction evidence="1">
        <text>UDP-N-acetyl-alpha-D-muramoyl-L-alanyl-gamma-D-glutamyl-meso-2,6-diaminopimeloyl-D-alanyl-D-alanine + di-trans,octa-cis-undecaprenyl phosphate = di-trans,octa-cis-undecaprenyl diphospho-N-acetyl-alpha-D-muramoyl-L-alanyl-D-glutamyl-meso-2,6-diaminopimeloyl-D-alanyl-D-alanine + UMP</text>
        <dbReference type="Rhea" id="RHEA:28386"/>
        <dbReference type="ChEBI" id="CHEBI:57865"/>
        <dbReference type="ChEBI" id="CHEBI:60392"/>
        <dbReference type="ChEBI" id="CHEBI:61386"/>
        <dbReference type="ChEBI" id="CHEBI:61387"/>
        <dbReference type="EC" id="2.7.8.13"/>
    </reaction>
</comment>
<comment type="cofactor">
    <cofactor evidence="1">
        <name>Mg(2+)</name>
        <dbReference type="ChEBI" id="CHEBI:18420"/>
    </cofactor>
</comment>
<comment type="pathway">
    <text evidence="1">Cell wall biogenesis; peptidoglycan biosynthesis.</text>
</comment>
<comment type="subcellular location">
    <subcellularLocation>
        <location evidence="1">Cell membrane</location>
        <topology evidence="1">Multi-pass membrane protein</topology>
    </subcellularLocation>
</comment>
<comment type="similarity">
    <text evidence="1">Belongs to the glycosyltransferase 4 family. MraY subfamily.</text>
</comment>
<organism>
    <name type="scientific">Chloroflexus aurantiacus (strain ATCC 29366 / DSM 635 / J-10-fl)</name>
    <dbReference type="NCBI Taxonomy" id="324602"/>
    <lineage>
        <taxon>Bacteria</taxon>
        <taxon>Bacillati</taxon>
        <taxon>Chloroflexota</taxon>
        <taxon>Chloroflexia</taxon>
        <taxon>Chloroflexales</taxon>
        <taxon>Chloroflexineae</taxon>
        <taxon>Chloroflexaceae</taxon>
        <taxon>Chloroflexus</taxon>
    </lineage>
</organism>
<gene>
    <name evidence="1" type="primary">mraY</name>
    <name type="ordered locus">Caur_0759</name>
</gene>
<dbReference type="EC" id="2.7.8.13" evidence="1"/>
<dbReference type="EMBL" id="CP000909">
    <property type="protein sequence ID" value="ABY33997.1"/>
    <property type="molecule type" value="Genomic_DNA"/>
</dbReference>
<dbReference type="RefSeq" id="WP_012256653.1">
    <property type="nucleotide sequence ID" value="NC_010175.1"/>
</dbReference>
<dbReference type="RefSeq" id="YP_001634386.1">
    <property type="nucleotide sequence ID" value="NC_010175.1"/>
</dbReference>
<dbReference type="SMR" id="A9WG76"/>
<dbReference type="FunCoup" id="A9WG76">
    <property type="interactions" value="440"/>
</dbReference>
<dbReference type="STRING" id="324602.Caur_0759"/>
<dbReference type="EnsemblBacteria" id="ABY33997">
    <property type="protein sequence ID" value="ABY33997"/>
    <property type="gene ID" value="Caur_0759"/>
</dbReference>
<dbReference type="KEGG" id="cau:Caur_0759"/>
<dbReference type="PATRIC" id="fig|324602.8.peg.864"/>
<dbReference type="eggNOG" id="COG0472">
    <property type="taxonomic scope" value="Bacteria"/>
</dbReference>
<dbReference type="HOGENOM" id="CLU_023982_0_1_0"/>
<dbReference type="InParanoid" id="A9WG76"/>
<dbReference type="UniPathway" id="UPA00219"/>
<dbReference type="Proteomes" id="UP000002008">
    <property type="component" value="Chromosome"/>
</dbReference>
<dbReference type="GO" id="GO:0005886">
    <property type="term" value="C:plasma membrane"/>
    <property type="evidence" value="ECO:0000318"/>
    <property type="project" value="GO_Central"/>
</dbReference>
<dbReference type="GO" id="GO:0046872">
    <property type="term" value="F:metal ion binding"/>
    <property type="evidence" value="ECO:0007669"/>
    <property type="project" value="UniProtKB-KW"/>
</dbReference>
<dbReference type="GO" id="GO:0008963">
    <property type="term" value="F:phospho-N-acetylmuramoyl-pentapeptide-transferase activity"/>
    <property type="evidence" value="ECO:0007669"/>
    <property type="project" value="UniProtKB-UniRule"/>
</dbReference>
<dbReference type="GO" id="GO:0016780">
    <property type="term" value="F:phosphotransferase activity, for other substituted phosphate groups"/>
    <property type="evidence" value="ECO:0000318"/>
    <property type="project" value="GO_Central"/>
</dbReference>
<dbReference type="GO" id="GO:0051992">
    <property type="term" value="F:UDP-N-acetylmuramoyl-L-alanyl-D-glutamyl-meso-2,6-diaminopimelyl-D-alanyl-D-alanine:undecaprenyl-phosphate transferase activity"/>
    <property type="evidence" value="ECO:0007669"/>
    <property type="project" value="RHEA"/>
</dbReference>
<dbReference type="GO" id="GO:0051301">
    <property type="term" value="P:cell division"/>
    <property type="evidence" value="ECO:0007669"/>
    <property type="project" value="UniProtKB-KW"/>
</dbReference>
<dbReference type="GO" id="GO:0044038">
    <property type="term" value="P:cell wall macromolecule biosynthetic process"/>
    <property type="evidence" value="ECO:0000318"/>
    <property type="project" value="GO_Central"/>
</dbReference>
<dbReference type="GO" id="GO:0071555">
    <property type="term" value="P:cell wall organization"/>
    <property type="evidence" value="ECO:0000318"/>
    <property type="project" value="GO_Central"/>
</dbReference>
<dbReference type="GO" id="GO:0009252">
    <property type="term" value="P:peptidoglycan biosynthetic process"/>
    <property type="evidence" value="ECO:0007669"/>
    <property type="project" value="UniProtKB-UniRule"/>
</dbReference>
<dbReference type="GO" id="GO:0008360">
    <property type="term" value="P:regulation of cell shape"/>
    <property type="evidence" value="ECO:0007669"/>
    <property type="project" value="UniProtKB-KW"/>
</dbReference>
<dbReference type="CDD" id="cd06852">
    <property type="entry name" value="GT_MraY"/>
    <property type="match status" value="1"/>
</dbReference>
<dbReference type="HAMAP" id="MF_00038">
    <property type="entry name" value="MraY"/>
    <property type="match status" value="1"/>
</dbReference>
<dbReference type="InterPro" id="IPR000715">
    <property type="entry name" value="Glycosyl_transferase_4"/>
</dbReference>
<dbReference type="InterPro" id="IPR003524">
    <property type="entry name" value="PNAcMuramoyl-5peptid_Trfase"/>
</dbReference>
<dbReference type="InterPro" id="IPR018480">
    <property type="entry name" value="PNAcMuramoyl-5peptid_Trfase_CS"/>
</dbReference>
<dbReference type="NCBIfam" id="TIGR00445">
    <property type="entry name" value="mraY"/>
    <property type="match status" value="1"/>
</dbReference>
<dbReference type="PANTHER" id="PTHR22926">
    <property type="entry name" value="PHOSPHO-N-ACETYLMURAMOYL-PENTAPEPTIDE-TRANSFERASE"/>
    <property type="match status" value="1"/>
</dbReference>
<dbReference type="PANTHER" id="PTHR22926:SF5">
    <property type="entry name" value="PHOSPHO-N-ACETYLMURAMOYL-PENTAPEPTIDE-TRANSFERASE HOMOLOG"/>
    <property type="match status" value="1"/>
</dbReference>
<dbReference type="Pfam" id="PF00953">
    <property type="entry name" value="Glycos_transf_4"/>
    <property type="match status" value="1"/>
</dbReference>
<dbReference type="PROSITE" id="PS01347">
    <property type="entry name" value="MRAY_1"/>
    <property type="match status" value="1"/>
</dbReference>